<sequence length="100" mass="11760">MAKKSSIEREKKRSELTQKYSNLRKSLKEMIHQASSLEEKWSIQRQLQRLPRNSAATRVHRRCFVTGRPRAVYRDFGLSRHVIREMAHACLLPGVIKASW</sequence>
<keyword id="KW-0150">Chloroplast</keyword>
<keyword id="KW-0934">Plastid</keyword>
<keyword id="KW-0687">Ribonucleoprotein</keyword>
<keyword id="KW-0689">Ribosomal protein</keyword>
<keyword id="KW-0694">RNA-binding</keyword>
<keyword id="KW-0699">rRNA-binding</keyword>
<protein>
    <recommendedName>
        <fullName evidence="1">Small ribosomal subunit protein uS14c</fullName>
    </recommendedName>
    <alternativeName>
        <fullName evidence="2">30S ribosomal protein S14, chloroplastic</fullName>
    </alternativeName>
</protein>
<dbReference type="EMBL" id="AY958086">
    <property type="protein sequence ID" value="AAX45867.1"/>
    <property type="molecule type" value="Genomic_DNA"/>
</dbReference>
<dbReference type="RefSeq" id="YP_636474.1">
    <property type="nucleotide sequence ID" value="NC_008117.1"/>
</dbReference>
<dbReference type="SMR" id="Q32RQ2"/>
<dbReference type="GeneID" id="4108187"/>
<dbReference type="GO" id="GO:0009507">
    <property type="term" value="C:chloroplast"/>
    <property type="evidence" value="ECO:0007669"/>
    <property type="project" value="UniProtKB-SubCell"/>
</dbReference>
<dbReference type="GO" id="GO:0015935">
    <property type="term" value="C:small ribosomal subunit"/>
    <property type="evidence" value="ECO:0007669"/>
    <property type="project" value="TreeGrafter"/>
</dbReference>
<dbReference type="GO" id="GO:0019843">
    <property type="term" value="F:rRNA binding"/>
    <property type="evidence" value="ECO:0007669"/>
    <property type="project" value="UniProtKB-UniRule"/>
</dbReference>
<dbReference type="GO" id="GO:0003735">
    <property type="term" value="F:structural constituent of ribosome"/>
    <property type="evidence" value="ECO:0007669"/>
    <property type="project" value="InterPro"/>
</dbReference>
<dbReference type="GO" id="GO:0006412">
    <property type="term" value="P:translation"/>
    <property type="evidence" value="ECO:0007669"/>
    <property type="project" value="UniProtKB-UniRule"/>
</dbReference>
<dbReference type="FunFam" id="1.10.287.1480:FF:000001">
    <property type="entry name" value="30S ribosomal protein S14"/>
    <property type="match status" value="1"/>
</dbReference>
<dbReference type="Gene3D" id="1.10.287.1480">
    <property type="match status" value="1"/>
</dbReference>
<dbReference type="HAMAP" id="MF_00537">
    <property type="entry name" value="Ribosomal_uS14_1"/>
    <property type="match status" value="1"/>
</dbReference>
<dbReference type="InterPro" id="IPR001209">
    <property type="entry name" value="Ribosomal_uS14"/>
</dbReference>
<dbReference type="InterPro" id="IPR023036">
    <property type="entry name" value="Ribosomal_uS14_bac/plastid"/>
</dbReference>
<dbReference type="InterPro" id="IPR018271">
    <property type="entry name" value="Ribosomal_uS14_CS"/>
</dbReference>
<dbReference type="NCBIfam" id="NF006477">
    <property type="entry name" value="PRK08881.1"/>
    <property type="match status" value="1"/>
</dbReference>
<dbReference type="PANTHER" id="PTHR19836">
    <property type="entry name" value="30S RIBOSOMAL PROTEIN S14"/>
    <property type="match status" value="1"/>
</dbReference>
<dbReference type="PANTHER" id="PTHR19836:SF19">
    <property type="entry name" value="SMALL RIBOSOMAL SUBUNIT PROTEIN US14M"/>
    <property type="match status" value="1"/>
</dbReference>
<dbReference type="Pfam" id="PF00253">
    <property type="entry name" value="Ribosomal_S14"/>
    <property type="match status" value="1"/>
</dbReference>
<dbReference type="SUPFAM" id="SSF57716">
    <property type="entry name" value="Glucocorticoid receptor-like (DNA-binding domain)"/>
    <property type="match status" value="1"/>
</dbReference>
<dbReference type="PROSITE" id="PS00527">
    <property type="entry name" value="RIBOSOMAL_S14"/>
    <property type="match status" value="1"/>
</dbReference>
<reference key="1">
    <citation type="journal article" date="2005" name="BMC Biol.">
        <title>The complete chloroplast DNA sequences of the charophycean green algae Staurastrum and Zygnema reveal that the chloroplast genome underwent extensive changes during the evolution of the Zygnematales.</title>
        <authorList>
            <person name="Turmel M."/>
            <person name="Otis C."/>
            <person name="Lemieux C."/>
        </authorList>
    </citation>
    <scope>NUCLEOTIDE SEQUENCE [LARGE SCALE GENOMIC DNA]</scope>
</reference>
<proteinExistence type="inferred from homology"/>
<comment type="function">
    <text evidence="1">Binds 16S rRNA, required for the assembly of 30S particles.</text>
</comment>
<comment type="subunit">
    <text evidence="1">Part of the 30S ribosomal subunit.</text>
</comment>
<comment type="subcellular location">
    <subcellularLocation>
        <location>Plastid</location>
        <location>Chloroplast</location>
    </subcellularLocation>
</comment>
<comment type="similarity">
    <text evidence="1">Belongs to the universal ribosomal protein uS14 family.</text>
</comment>
<evidence type="ECO:0000255" key="1">
    <source>
        <dbReference type="HAMAP-Rule" id="MF_00537"/>
    </source>
</evidence>
<evidence type="ECO:0000305" key="2"/>
<accession>Q32RQ2</accession>
<gene>
    <name evidence="1" type="primary">rps14</name>
</gene>
<name>RR14_ZYGCR</name>
<feature type="chain" id="PRO_0000276709" description="Small ribosomal subunit protein uS14c">
    <location>
        <begin position="1"/>
        <end position="100"/>
    </location>
</feature>
<geneLocation type="chloroplast"/>
<organism>
    <name type="scientific">Zygnema circumcarinatum</name>
    <name type="common">Green alga</name>
    <dbReference type="NCBI Taxonomy" id="35869"/>
    <lineage>
        <taxon>Eukaryota</taxon>
        <taxon>Viridiplantae</taxon>
        <taxon>Streptophyta</taxon>
        <taxon>Zygnematophyceae</taxon>
        <taxon>Zygnematophycidae</taxon>
        <taxon>Zygnematales</taxon>
        <taxon>Zygnemataceae</taxon>
        <taxon>Zygnema</taxon>
    </lineage>
</organism>